<feature type="chain" id="PRO_0000272741" description="Large ribosomal subunit protein uL23">
    <location>
        <begin position="1"/>
        <end position="96"/>
    </location>
</feature>
<gene>
    <name evidence="1" type="primary">rplW</name>
    <name type="ordered locus">Dde_2255</name>
</gene>
<proteinExistence type="inferred from homology"/>
<accession>Q30Z44</accession>
<reference key="1">
    <citation type="journal article" date="2011" name="J. Bacteriol.">
        <title>Complete genome sequence and updated annotation of Desulfovibrio alaskensis G20.</title>
        <authorList>
            <person name="Hauser L.J."/>
            <person name="Land M.L."/>
            <person name="Brown S.D."/>
            <person name="Larimer F."/>
            <person name="Keller K.L."/>
            <person name="Rapp-Giles B.J."/>
            <person name="Price M.N."/>
            <person name="Lin M."/>
            <person name="Bruce D.C."/>
            <person name="Detter J.C."/>
            <person name="Tapia R."/>
            <person name="Han C.S."/>
            <person name="Goodwin L.A."/>
            <person name="Cheng J.F."/>
            <person name="Pitluck S."/>
            <person name="Copeland A."/>
            <person name="Lucas S."/>
            <person name="Nolan M."/>
            <person name="Lapidus A.L."/>
            <person name="Palumbo A.V."/>
            <person name="Wall J.D."/>
        </authorList>
    </citation>
    <scope>NUCLEOTIDE SEQUENCE [LARGE SCALE GENOMIC DNA]</scope>
    <source>
        <strain>ATCC BAA-1058 / DSM 17464 / G20</strain>
    </source>
</reference>
<sequence>MDYTQILIKPLVSEKATFVKESSEQVVFFVNPRANKIEIKKAVESVFNVKVAGVNVVTRKPQARTKHGRVTGQTAGYKKAYVTLAPGEKIDFFEGV</sequence>
<comment type="function">
    <text evidence="1">One of the early assembly proteins it binds 23S rRNA. One of the proteins that surrounds the polypeptide exit tunnel on the outside of the ribosome. Forms the main docking site for trigger factor binding to the ribosome.</text>
</comment>
<comment type="subunit">
    <text evidence="1">Part of the 50S ribosomal subunit. Contacts protein L29, and trigger factor when it is bound to the ribosome.</text>
</comment>
<comment type="similarity">
    <text evidence="1">Belongs to the universal ribosomal protein uL23 family.</text>
</comment>
<keyword id="KW-1185">Reference proteome</keyword>
<keyword id="KW-0687">Ribonucleoprotein</keyword>
<keyword id="KW-0689">Ribosomal protein</keyword>
<keyword id="KW-0694">RNA-binding</keyword>
<keyword id="KW-0699">rRNA-binding</keyword>
<evidence type="ECO:0000255" key="1">
    <source>
        <dbReference type="HAMAP-Rule" id="MF_01369"/>
    </source>
</evidence>
<evidence type="ECO:0000305" key="2"/>
<dbReference type="EMBL" id="CP000112">
    <property type="protein sequence ID" value="ABB39052.1"/>
    <property type="molecule type" value="Genomic_DNA"/>
</dbReference>
<dbReference type="RefSeq" id="WP_011368143.1">
    <property type="nucleotide sequence ID" value="NC_007519.1"/>
</dbReference>
<dbReference type="SMR" id="Q30Z44"/>
<dbReference type="STRING" id="207559.Dde_2255"/>
<dbReference type="KEGG" id="dde:Dde_2255"/>
<dbReference type="eggNOG" id="COG0089">
    <property type="taxonomic scope" value="Bacteria"/>
</dbReference>
<dbReference type="HOGENOM" id="CLU_037562_3_1_7"/>
<dbReference type="Proteomes" id="UP000002710">
    <property type="component" value="Chromosome"/>
</dbReference>
<dbReference type="GO" id="GO:1990904">
    <property type="term" value="C:ribonucleoprotein complex"/>
    <property type="evidence" value="ECO:0007669"/>
    <property type="project" value="UniProtKB-KW"/>
</dbReference>
<dbReference type="GO" id="GO:0005840">
    <property type="term" value="C:ribosome"/>
    <property type="evidence" value="ECO:0007669"/>
    <property type="project" value="UniProtKB-KW"/>
</dbReference>
<dbReference type="GO" id="GO:0019843">
    <property type="term" value="F:rRNA binding"/>
    <property type="evidence" value="ECO:0007669"/>
    <property type="project" value="UniProtKB-UniRule"/>
</dbReference>
<dbReference type="GO" id="GO:0003735">
    <property type="term" value="F:structural constituent of ribosome"/>
    <property type="evidence" value="ECO:0007669"/>
    <property type="project" value="InterPro"/>
</dbReference>
<dbReference type="GO" id="GO:0006412">
    <property type="term" value="P:translation"/>
    <property type="evidence" value="ECO:0007669"/>
    <property type="project" value="UniProtKB-UniRule"/>
</dbReference>
<dbReference type="FunFam" id="3.30.70.330:FF:000001">
    <property type="entry name" value="50S ribosomal protein L23"/>
    <property type="match status" value="1"/>
</dbReference>
<dbReference type="Gene3D" id="3.30.70.330">
    <property type="match status" value="1"/>
</dbReference>
<dbReference type="HAMAP" id="MF_01369_B">
    <property type="entry name" value="Ribosomal_uL23_B"/>
    <property type="match status" value="1"/>
</dbReference>
<dbReference type="InterPro" id="IPR012677">
    <property type="entry name" value="Nucleotide-bd_a/b_plait_sf"/>
</dbReference>
<dbReference type="InterPro" id="IPR013025">
    <property type="entry name" value="Ribosomal_uL23-like"/>
</dbReference>
<dbReference type="InterPro" id="IPR012678">
    <property type="entry name" value="Ribosomal_uL23/eL15/eS24_sf"/>
</dbReference>
<dbReference type="InterPro" id="IPR001014">
    <property type="entry name" value="Ribosomal_uL23_CS"/>
</dbReference>
<dbReference type="NCBIfam" id="NF004359">
    <property type="entry name" value="PRK05738.1-3"/>
    <property type="match status" value="1"/>
</dbReference>
<dbReference type="NCBIfam" id="NF004363">
    <property type="entry name" value="PRK05738.2-4"/>
    <property type="match status" value="1"/>
</dbReference>
<dbReference type="PANTHER" id="PTHR11620">
    <property type="entry name" value="60S RIBOSOMAL PROTEIN L23A"/>
    <property type="match status" value="1"/>
</dbReference>
<dbReference type="Pfam" id="PF00276">
    <property type="entry name" value="Ribosomal_L23"/>
    <property type="match status" value="1"/>
</dbReference>
<dbReference type="SUPFAM" id="SSF54189">
    <property type="entry name" value="Ribosomal proteins S24e, L23 and L15e"/>
    <property type="match status" value="1"/>
</dbReference>
<dbReference type="PROSITE" id="PS00050">
    <property type="entry name" value="RIBOSOMAL_L23"/>
    <property type="match status" value="1"/>
</dbReference>
<name>RL23_OLEA2</name>
<protein>
    <recommendedName>
        <fullName evidence="1">Large ribosomal subunit protein uL23</fullName>
    </recommendedName>
    <alternativeName>
        <fullName evidence="2">50S ribosomal protein L23</fullName>
    </alternativeName>
</protein>
<organism>
    <name type="scientific">Oleidesulfovibrio alaskensis (strain ATCC BAA-1058 / DSM 17464 / G20)</name>
    <name type="common">Desulfovibrio alaskensis</name>
    <dbReference type="NCBI Taxonomy" id="207559"/>
    <lineage>
        <taxon>Bacteria</taxon>
        <taxon>Pseudomonadati</taxon>
        <taxon>Thermodesulfobacteriota</taxon>
        <taxon>Desulfovibrionia</taxon>
        <taxon>Desulfovibrionales</taxon>
        <taxon>Desulfovibrionaceae</taxon>
        <taxon>Oleidesulfovibrio</taxon>
    </lineage>
</organism>